<accession>O26139</accession>
<name>RL14E_METTH</name>
<sequence length="75" mass="8336">MAAIEVGRVCVKTAGREAGENGVILDIIDKNFVEVVGVNVKNRRCNVSHLEPTENKIELKSDDIEEIKKELESLE</sequence>
<comment type="similarity">
    <text evidence="1">Belongs to the eukaryotic ribosomal protein eL14 family.</text>
</comment>
<protein>
    <recommendedName>
        <fullName evidence="1">Large ribosomal subunit protein eL14</fullName>
    </recommendedName>
    <alternativeName>
        <fullName evidence="2">50S ribosomal protein L14e</fullName>
    </alternativeName>
</protein>
<gene>
    <name evidence="1" type="primary">rpl14e</name>
    <name type="ordered locus">MTH_31</name>
</gene>
<organism>
    <name type="scientific">Methanothermobacter thermautotrophicus (strain ATCC 29096 / DSM 1053 / JCM 10044 / NBRC 100330 / Delta H)</name>
    <name type="common">Methanobacterium thermoautotrophicum</name>
    <dbReference type="NCBI Taxonomy" id="187420"/>
    <lineage>
        <taxon>Archaea</taxon>
        <taxon>Methanobacteriati</taxon>
        <taxon>Methanobacteriota</taxon>
        <taxon>Methanomada group</taxon>
        <taxon>Methanobacteria</taxon>
        <taxon>Methanobacteriales</taxon>
        <taxon>Methanobacteriaceae</taxon>
        <taxon>Methanothermobacter</taxon>
    </lineage>
</organism>
<proteinExistence type="inferred from homology"/>
<reference key="1">
    <citation type="journal article" date="1997" name="J. Bacteriol.">
        <title>Complete genome sequence of Methanobacterium thermoautotrophicum deltaH: functional analysis and comparative genomics.</title>
        <authorList>
            <person name="Smith D.R."/>
            <person name="Doucette-Stamm L.A."/>
            <person name="Deloughery C."/>
            <person name="Lee H.-M."/>
            <person name="Dubois J."/>
            <person name="Aldredge T."/>
            <person name="Bashirzadeh R."/>
            <person name="Blakely D."/>
            <person name="Cook R."/>
            <person name="Gilbert K."/>
            <person name="Harrison D."/>
            <person name="Hoang L."/>
            <person name="Keagle P."/>
            <person name="Lumm W."/>
            <person name="Pothier B."/>
            <person name="Qiu D."/>
            <person name="Spadafora R."/>
            <person name="Vicare R."/>
            <person name="Wang Y."/>
            <person name="Wierzbowski J."/>
            <person name="Gibson R."/>
            <person name="Jiwani N."/>
            <person name="Caruso A."/>
            <person name="Bush D."/>
            <person name="Safer H."/>
            <person name="Patwell D."/>
            <person name="Prabhakar S."/>
            <person name="McDougall S."/>
            <person name="Shimer G."/>
            <person name="Goyal A."/>
            <person name="Pietrovski S."/>
            <person name="Church G.M."/>
            <person name="Daniels C.J."/>
            <person name="Mao J.-I."/>
            <person name="Rice P."/>
            <person name="Noelling J."/>
            <person name="Reeve J.N."/>
        </authorList>
    </citation>
    <scope>NUCLEOTIDE SEQUENCE [LARGE SCALE GENOMIC DNA]</scope>
    <source>
        <strain>ATCC 29096 / DSM 1053 / JCM 10044 / NBRC 100330 / Delta H</strain>
    </source>
</reference>
<feature type="chain" id="PRO_0000132049" description="Large ribosomal subunit protein eL14">
    <location>
        <begin position="1"/>
        <end position="75"/>
    </location>
</feature>
<dbReference type="EMBL" id="AE000666">
    <property type="protein sequence ID" value="AAB84540.1"/>
    <property type="molecule type" value="Genomic_DNA"/>
</dbReference>
<dbReference type="PIR" id="F69139">
    <property type="entry name" value="F69139"/>
</dbReference>
<dbReference type="RefSeq" id="WP_010875673.1">
    <property type="nucleotide sequence ID" value="NC_000916.1"/>
</dbReference>
<dbReference type="SMR" id="O26139"/>
<dbReference type="FunCoup" id="O26139">
    <property type="interactions" value="116"/>
</dbReference>
<dbReference type="STRING" id="187420.MTH_31"/>
<dbReference type="PaxDb" id="187420-MTH_31"/>
<dbReference type="DNASU" id="1469993"/>
<dbReference type="EnsemblBacteria" id="AAB84540">
    <property type="protein sequence ID" value="AAB84540"/>
    <property type="gene ID" value="MTH_31"/>
</dbReference>
<dbReference type="GeneID" id="1469993"/>
<dbReference type="KEGG" id="mth:MTH_31"/>
<dbReference type="PATRIC" id="fig|187420.15.peg.31"/>
<dbReference type="HOGENOM" id="CLU_183474_0_0_2"/>
<dbReference type="InParanoid" id="O26139"/>
<dbReference type="Proteomes" id="UP000005223">
    <property type="component" value="Chromosome"/>
</dbReference>
<dbReference type="GO" id="GO:1990904">
    <property type="term" value="C:ribonucleoprotein complex"/>
    <property type="evidence" value="ECO:0007669"/>
    <property type="project" value="UniProtKB-KW"/>
</dbReference>
<dbReference type="GO" id="GO:0005840">
    <property type="term" value="C:ribosome"/>
    <property type="evidence" value="ECO:0007669"/>
    <property type="project" value="UniProtKB-KW"/>
</dbReference>
<dbReference type="GO" id="GO:0003735">
    <property type="term" value="F:structural constituent of ribosome"/>
    <property type="evidence" value="ECO:0007669"/>
    <property type="project" value="InterPro"/>
</dbReference>
<dbReference type="GO" id="GO:0006412">
    <property type="term" value="P:translation"/>
    <property type="evidence" value="ECO:0007669"/>
    <property type="project" value="UniProtKB-UniRule"/>
</dbReference>
<dbReference type="CDD" id="cd06088">
    <property type="entry name" value="KOW_RPL14"/>
    <property type="match status" value="1"/>
</dbReference>
<dbReference type="Gene3D" id="2.30.30.30">
    <property type="match status" value="1"/>
</dbReference>
<dbReference type="HAMAP" id="MF_00721">
    <property type="entry name" value="Ribosomal_eL14"/>
    <property type="match status" value="1"/>
</dbReference>
<dbReference type="InterPro" id="IPR005824">
    <property type="entry name" value="KOW"/>
</dbReference>
<dbReference type="InterPro" id="IPR014722">
    <property type="entry name" value="Rib_uL2_dom2"/>
</dbReference>
<dbReference type="InterPro" id="IPR023651">
    <property type="entry name" value="Ribosomal_eL14_arc"/>
</dbReference>
<dbReference type="InterPro" id="IPR041985">
    <property type="entry name" value="Ribosomal_eL14_KOW"/>
</dbReference>
<dbReference type="InterPro" id="IPR008991">
    <property type="entry name" value="Translation_prot_SH3-like_sf"/>
</dbReference>
<dbReference type="NCBIfam" id="NF003320">
    <property type="entry name" value="PRK04333.1"/>
    <property type="match status" value="1"/>
</dbReference>
<dbReference type="Pfam" id="PF00467">
    <property type="entry name" value="KOW"/>
    <property type="match status" value="1"/>
</dbReference>
<dbReference type="SUPFAM" id="SSF50104">
    <property type="entry name" value="Translation proteins SH3-like domain"/>
    <property type="match status" value="1"/>
</dbReference>
<keyword id="KW-1185">Reference proteome</keyword>
<keyword id="KW-0687">Ribonucleoprotein</keyword>
<keyword id="KW-0689">Ribosomal protein</keyword>
<evidence type="ECO:0000255" key="1">
    <source>
        <dbReference type="HAMAP-Rule" id="MF_00721"/>
    </source>
</evidence>
<evidence type="ECO:0000305" key="2"/>